<protein>
    <recommendedName>
        <fullName>Putative antiporter subunit mnhB2</fullName>
    </recommendedName>
    <alternativeName>
        <fullName>Mrp complex subunit B2</fullName>
    </alternativeName>
    <alternativeName>
        <fullName>Putative NADH-ubiquinone oxidoreductase subunit mnhB2</fullName>
    </alternativeName>
</protein>
<organism>
    <name type="scientific">Staphylococcus aureus (strain Mu50 / ATCC 700699)</name>
    <dbReference type="NCBI Taxonomy" id="158878"/>
    <lineage>
        <taxon>Bacteria</taxon>
        <taxon>Bacillati</taxon>
        <taxon>Bacillota</taxon>
        <taxon>Bacilli</taxon>
        <taxon>Bacillales</taxon>
        <taxon>Staphylococcaceae</taxon>
        <taxon>Staphylococcus</taxon>
    </lineage>
</organism>
<keyword id="KW-0050">Antiport</keyword>
<keyword id="KW-1003">Cell membrane</keyword>
<keyword id="KW-0406">Ion transport</keyword>
<keyword id="KW-0472">Membrane</keyword>
<keyword id="KW-0812">Transmembrane</keyword>
<keyword id="KW-1133">Transmembrane helix</keyword>
<keyword id="KW-0813">Transport</keyword>
<sequence>MKENDVVLRTVTKLVVFILLTFGFYVFFAGHNNPGGGFIGGLIFSSAFILMFLAFNVEEVLESLPIDFRILMIIGALVSSITAIIPMFFGKPFLSQYETTWILPILGQIHVSTITLFELGILFSVVGVIVTVMLSLSGGRS</sequence>
<dbReference type="EMBL" id="BA000017">
    <property type="protein sequence ID" value="BAB56785.1"/>
    <property type="molecule type" value="Genomic_DNA"/>
</dbReference>
<dbReference type="RefSeq" id="WP_000661906.1">
    <property type="nucleotide sequence ID" value="NC_002758.2"/>
</dbReference>
<dbReference type="SMR" id="Q99VZ1"/>
<dbReference type="KEGG" id="sav:SAV0623"/>
<dbReference type="HOGENOM" id="CLU_101659_1_1_9"/>
<dbReference type="PhylomeDB" id="Q99VZ1"/>
<dbReference type="Proteomes" id="UP000002481">
    <property type="component" value="Chromosome"/>
</dbReference>
<dbReference type="GO" id="GO:0005886">
    <property type="term" value="C:plasma membrane"/>
    <property type="evidence" value="ECO:0007669"/>
    <property type="project" value="UniProtKB-SubCell"/>
</dbReference>
<dbReference type="GO" id="GO:0015297">
    <property type="term" value="F:antiporter activity"/>
    <property type="evidence" value="ECO:0007669"/>
    <property type="project" value="UniProtKB-KW"/>
</dbReference>
<dbReference type="GO" id="GO:0006811">
    <property type="term" value="P:monoatomic ion transport"/>
    <property type="evidence" value="ECO:0007669"/>
    <property type="project" value="UniProtKB-KW"/>
</dbReference>
<dbReference type="InterPro" id="IPR050622">
    <property type="entry name" value="CPA3_antiporter_subunitB"/>
</dbReference>
<dbReference type="InterPro" id="IPR007182">
    <property type="entry name" value="MnhB"/>
</dbReference>
<dbReference type="NCBIfam" id="NF009223">
    <property type="entry name" value="PRK12573.1"/>
    <property type="match status" value="1"/>
</dbReference>
<dbReference type="NCBIfam" id="NF009224">
    <property type="entry name" value="PRK12574.1"/>
    <property type="match status" value="1"/>
</dbReference>
<dbReference type="PANTHER" id="PTHR33932">
    <property type="entry name" value="NA(+)/H(+) ANTIPORTER SUBUNIT B"/>
    <property type="match status" value="1"/>
</dbReference>
<dbReference type="PANTHER" id="PTHR33932:SF4">
    <property type="entry name" value="NA(+)_H(+) ANTIPORTER SUBUNIT B"/>
    <property type="match status" value="1"/>
</dbReference>
<dbReference type="Pfam" id="PF04039">
    <property type="entry name" value="MnhB"/>
    <property type="match status" value="1"/>
</dbReference>
<evidence type="ECO:0000250" key="1"/>
<evidence type="ECO:0000255" key="2"/>
<evidence type="ECO:0000305" key="3"/>
<comment type="subunit">
    <text evidence="1">May form a heterooligomeric complex that consists of seven subunits: mnhA2, mnhB2, mnhC2, mnhD2, mnhE2, mnhF2 and mnhG2.</text>
</comment>
<comment type="subcellular location">
    <subcellularLocation>
        <location evidence="3">Cell membrane</location>
        <topology evidence="3">Multi-pass membrane protein</topology>
    </subcellularLocation>
</comment>
<comment type="similarity">
    <text evidence="3">Belongs to the CPA3 antiporters (TC 2.A.63) subunit B family.</text>
</comment>
<feature type="chain" id="PRO_0000372274" description="Putative antiporter subunit mnhB2">
    <location>
        <begin position="1"/>
        <end position="141"/>
    </location>
</feature>
<feature type="transmembrane region" description="Helical" evidence="2">
    <location>
        <begin position="10"/>
        <end position="30"/>
    </location>
</feature>
<feature type="transmembrane region" description="Helical" evidence="2">
    <location>
        <begin position="35"/>
        <end position="55"/>
    </location>
</feature>
<feature type="transmembrane region" description="Helical" evidence="2">
    <location>
        <begin position="70"/>
        <end position="90"/>
    </location>
</feature>
<feature type="transmembrane region" description="Helical" evidence="2">
    <location>
        <begin position="114"/>
        <end position="134"/>
    </location>
</feature>
<reference key="1">
    <citation type="journal article" date="2001" name="Lancet">
        <title>Whole genome sequencing of meticillin-resistant Staphylococcus aureus.</title>
        <authorList>
            <person name="Kuroda M."/>
            <person name="Ohta T."/>
            <person name="Uchiyama I."/>
            <person name="Baba T."/>
            <person name="Yuzawa H."/>
            <person name="Kobayashi I."/>
            <person name="Cui L."/>
            <person name="Oguchi A."/>
            <person name="Aoki K."/>
            <person name="Nagai Y."/>
            <person name="Lian J.-Q."/>
            <person name="Ito T."/>
            <person name="Kanamori M."/>
            <person name="Matsumaru H."/>
            <person name="Maruyama A."/>
            <person name="Murakami H."/>
            <person name="Hosoyama A."/>
            <person name="Mizutani-Ui Y."/>
            <person name="Takahashi N.K."/>
            <person name="Sawano T."/>
            <person name="Inoue R."/>
            <person name="Kaito C."/>
            <person name="Sekimizu K."/>
            <person name="Hirakawa H."/>
            <person name="Kuhara S."/>
            <person name="Goto S."/>
            <person name="Yabuzaki J."/>
            <person name="Kanehisa M."/>
            <person name="Yamashita A."/>
            <person name="Oshima K."/>
            <person name="Furuya K."/>
            <person name="Yoshino C."/>
            <person name="Shiba T."/>
            <person name="Hattori M."/>
            <person name="Ogasawara N."/>
            <person name="Hayashi H."/>
            <person name="Hiramatsu K."/>
        </authorList>
    </citation>
    <scope>NUCLEOTIDE SEQUENCE [LARGE SCALE GENOMIC DNA]</scope>
    <source>
        <strain>Mu50 / ATCC 700699</strain>
    </source>
</reference>
<gene>
    <name type="primary">mnhB2</name>
    <name type="synonym">mrpB2</name>
    <name type="ordered locus">SAV0623</name>
</gene>
<proteinExistence type="inferred from homology"/>
<name>MNHB2_STAAM</name>
<accession>Q99VZ1</accession>